<organism>
    <name type="scientific">Fowlpox virus (strain NVSL)</name>
    <name type="common">FPV</name>
    <dbReference type="NCBI Taxonomy" id="928301"/>
    <lineage>
        <taxon>Viruses</taxon>
        <taxon>Varidnaviria</taxon>
        <taxon>Bamfordvirae</taxon>
        <taxon>Nucleocytoviricota</taxon>
        <taxon>Pokkesviricetes</taxon>
        <taxon>Chitovirales</taxon>
        <taxon>Poxviridae</taxon>
        <taxon>Chordopoxvirinae</taxon>
        <taxon>Avipoxvirus</taxon>
        <taxon>Fowlpox virus</taxon>
    </lineage>
</organism>
<sequence length="151" mass="17967">MEIKVESINNNFCKLSYEDIEIIMMKENEYINATRLCSSRGRDILDWMSKESSVELINELDRINRSCNDYYDYRGIVLNVVSDSETSELYVHRDLILHISHWISPLFSLKVVKFINSYIQDSYQLEYELIHKKSLMDQLKEIILLNDDNNM</sequence>
<proteinExistence type="predicted"/>
<name>V248_FOWPN</name>
<protein>
    <recommendedName>
        <fullName>Uncharacterized protein FPV248</fullName>
    </recommendedName>
    <alternativeName>
        <fullName>BamHI-ORF6</fullName>
    </alternativeName>
</protein>
<evidence type="ECO:0000255" key="1">
    <source>
        <dbReference type="PROSITE-ProRule" id="PRU00631"/>
    </source>
</evidence>
<reference key="1">
    <citation type="journal article" date="1988" name="J. Gen. Virol.">
        <title>Sequence analysis of an 11.2 kilobase, near-terminal, BamHI fragment of fowlpox virus.</title>
        <authorList>
            <person name="Tomley F."/>
            <person name="Binns M."/>
            <person name="Campbell J."/>
            <person name="Boursnell M.E.G."/>
        </authorList>
    </citation>
    <scope>NUCLEOTIDE SEQUENCE [GENOMIC DNA]</scope>
    <source>
        <strain>FP-9 / Isolate HP-438</strain>
    </source>
</reference>
<reference key="2">
    <citation type="journal article" date="2000" name="J. Virol.">
        <title>The genome of fowlpox virus.</title>
        <authorList>
            <person name="Afonso C.L."/>
            <person name="Tulman E.R."/>
            <person name="Lu Z."/>
            <person name="Zsak L."/>
            <person name="Kutish G.F."/>
            <person name="Rock D.L."/>
        </authorList>
    </citation>
    <scope>NUCLEOTIDE SEQUENCE [LARGE SCALE GENOMIC DNA]</scope>
</reference>
<feature type="chain" id="PRO_0000099735" description="Uncharacterized protein FPV248">
    <location>
        <begin position="1"/>
        <end position="151"/>
    </location>
</feature>
<feature type="domain" description="KilA-N" evidence="1">
    <location>
        <begin position="11"/>
        <end position="118"/>
    </location>
</feature>
<dbReference type="EMBL" id="D00295">
    <property type="protein sequence ID" value="BAA00198.1"/>
    <property type="molecule type" value="Genomic_DNA"/>
</dbReference>
<dbReference type="EMBL" id="AF198100">
    <property type="protein sequence ID" value="AAF44592.1"/>
    <property type="molecule type" value="Genomic_DNA"/>
</dbReference>
<dbReference type="PIR" id="F29963">
    <property type="entry name" value="WMVZF6"/>
</dbReference>
<dbReference type="RefSeq" id="NP_039211.1">
    <property type="nucleotide sequence ID" value="NC_002188.1"/>
</dbReference>
<dbReference type="GeneID" id="1486820"/>
<dbReference type="KEGG" id="vg:1486820"/>
<dbReference type="Proteomes" id="UP000008597">
    <property type="component" value="Segment"/>
</dbReference>
<dbReference type="InterPro" id="IPR018004">
    <property type="entry name" value="KilA/APSES_HTH"/>
</dbReference>
<dbReference type="InterPro" id="IPR017880">
    <property type="entry name" value="KilA_N"/>
</dbReference>
<dbReference type="Pfam" id="PF04383">
    <property type="entry name" value="KilA-N"/>
    <property type="match status" value="1"/>
</dbReference>
<dbReference type="SMART" id="SM01252">
    <property type="entry name" value="KilA-N"/>
    <property type="match status" value="1"/>
</dbReference>
<dbReference type="PROSITE" id="PS51301">
    <property type="entry name" value="KILA_N"/>
    <property type="match status" value="1"/>
</dbReference>
<organismHost>
    <name type="scientific">Vertebrata</name>
    <dbReference type="NCBI Taxonomy" id="7742"/>
</organismHost>
<gene>
    <name type="ordered locus">FPV248</name>
</gene>
<keyword id="KW-0244">Early protein</keyword>
<keyword id="KW-1185">Reference proteome</keyword>
<accession>P14364</accession>